<proteinExistence type="evidence at protein level"/>
<reference key="1">
    <citation type="journal article" date="2002" name="Nature">
        <title>The genome sequence of Schizosaccharomyces pombe.</title>
        <authorList>
            <person name="Wood V."/>
            <person name="Gwilliam R."/>
            <person name="Rajandream M.A."/>
            <person name="Lyne M.H."/>
            <person name="Lyne R."/>
            <person name="Stewart A."/>
            <person name="Sgouros J.G."/>
            <person name="Peat N."/>
            <person name="Hayles J."/>
            <person name="Baker S.G."/>
            <person name="Basham D."/>
            <person name="Bowman S."/>
            <person name="Brooks K."/>
            <person name="Brown D."/>
            <person name="Brown S."/>
            <person name="Chillingworth T."/>
            <person name="Churcher C.M."/>
            <person name="Collins M."/>
            <person name="Connor R."/>
            <person name="Cronin A."/>
            <person name="Davis P."/>
            <person name="Feltwell T."/>
            <person name="Fraser A."/>
            <person name="Gentles S."/>
            <person name="Goble A."/>
            <person name="Hamlin N."/>
            <person name="Harris D.E."/>
            <person name="Hidalgo J."/>
            <person name="Hodgson G."/>
            <person name="Holroyd S."/>
            <person name="Hornsby T."/>
            <person name="Howarth S."/>
            <person name="Huckle E.J."/>
            <person name="Hunt S."/>
            <person name="Jagels K."/>
            <person name="James K.D."/>
            <person name="Jones L."/>
            <person name="Jones M."/>
            <person name="Leather S."/>
            <person name="McDonald S."/>
            <person name="McLean J."/>
            <person name="Mooney P."/>
            <person name="Moule S."/>
            <person name="Mungall K.L."/>
            <person name="Murphy L.D."/>
            <person name="Niblett D."/>
            <person name="Odell C."/>
            <person name="Oliver K."/>
            <person name="O'Neil S."/>
            <person name="Pearson D."/>
            <person name="Quail M.A."/>
            <person name="Rabbinowitsch E."/>
            <person name="Rutherford K.M."/>
            <person name="Rutter S."/>
            <person name="Saunders D."/>
            <person name="Seeger K."/>
            <person name="Sharp S."/>
            <person name="Skelton J."/>
            <person name="Simmonds M.N."/>
            <person name="Squares R."/>
            <person name="Squares S."/>
            <person name="Stevens K."/>
            <person name="Taylor K."/>
            <person name="Taylor R.G."/>
            <person name="Tivey A."/>
            <person name="Walsh S.V."/>
            <person name="Warren T."/>
            <person name="Whitehead S."/>
            <person name="Woodward J.R."/>
            <person name="Volckaert G."/>
            <person name="Aert R."/>
            <person name="Robben J."/>
            <person name="Grymonprez B."/>
            <person name="Weltjens I."/>
            <person name="Vanstreels E."/>
            <person name="Rieger M."/>
            <person name="Schaefer M."/>
            <person name="Mueller-Auer S."/>
            <person name="Gabel C."/>
            <person name="Fuchs M."/>
            <person name="Duesterhoeft A."/>
            <person name="Fritzc C."/>
            <person name="Holzer E."/>
            <person name="Moestl D."/>
            <person name="Hilbert H."/>
            <person name="Borzym K."/>
            <person name="Langer I."/>
            <person name="Beck A."/>
            <person name="Lehrach H."/>
            <person name="Reinhardt R."/>
            <person name="Pohl T.M."/>
            <person name="Eger P."/>
            <person name="Zimmermann W."/>
            <person name="Wedler H."/>
            <person name="Wambutt R."/>
            <person name="Purnelle B."/>
            <person name="Goffeau A."/>
            <person name="Cadieu E."/>
            <person name="Dreano S."/>
            <person name="Gloux S."/>
            <person name="Lelaure V."/>
            <person name="Mottier S."/>
            <person name="Galibert F."/>
            <person name="Aves S.J."/>
            <person name="Xiang Z."/>
            <person name="Hunt C."/>
            <person name="Moore K."/>
            <person name="Hurst S.M."/>
            <person name="Lucas M."/>
            <person name="Rochet M."/>
            <person name="Gaillardin C."/>
            <person name="Tallada V.A."/>
            <person name="Garzon A."/>
            <person name="Thode G."/>
            <person name="Daga R.R."/>
            <person name="Cruzado L."/>
            <person name="Jimenez J."/>
            <person name="Sanchez M."/>
            <person name="del Rey F."/>
            <person name="Benito J."/>
            <person name="Dominguez A."/>
            <person name="Revuelta J.L."/>
            <person name="Moreno S."/>
            <person name="Armstrong J."/>
            <person name="Forsburg S.L."/>
            <person name="Cerutti L."/>
            <person name="Lowe T."/>
            <person name="McCombie W.R."/>
            <person name="Paulsen I."/>
            <person name="Potashkin J."/>
            <person name="Shpakovski G.V."/>
            <person name="Ussery D."/>
            <person name="Barrell B.G."/>
            <person name="Nurse P."/>
        </authorList>
    </citation>
    <scope>NUCLEOTIDE SEQUENCE [LARGE SCALE GENOMIC DNA]</scope>
    <source>
        <strain>972 / ATCC 24843</strain>
    </source>
</reference>
<reference key="2">
    <citation type="journal article" date="2006" name="Nat. Biotechnol.">
        <title>ORFeome cloning and global analysis of protein localization in the fission yeast Schizosaccharomyces pombe.</title>
        <authorList>
            <person name="Matsuyama A."/>
            <person name="Arai R."/>
            <person name="Yashiroda Y."/>
            <person name="Shirai A."/>
            <person name="Kamata A."/>
            <person name="Sekido S."/>
            <person name="Kobayashi Y."/>
            <person name="Hashimoto A."/>
            <person name="Hamamoto M."/>
            <person name="Hiraoka Y."/>
            <person name="Horinouchi S."/>
            <person name="Yoshida M."/>
        </authorList>
    </citation>
    <scope>SUBCELLULAR LOCATION [LARGE SCALE ANALYSIS]</scope>
</reference>
<reference key="3">
    <citation type="journal article" date="2008" name="Toxicol. Sci.">
        <title>A genome-wide screen of genes involved in cadmium tolerance in Schizosaccharomyces pombe.</title>
        <authorList>
            <person name="Kennedy P.J."/>
            <person name="Vashisht A.A."/>
            <person name="Hoe K.L."/>
            <person name="Kim D.U."/>
            <person name="Park H.O."/>
            <person name="Hayles J."/>
            <person name="Russell P."/>
        </authorList>
    </citation>
    <scope>FUNCTION</scope>
</reference>
<reference key="4">
    <citation type="journal article" date="2010" name="PLoS Biol.">
        <title>A global census of fission yeast deubiquitinating enzyme localization and interaction networks reveals distinct compartmentalization profiles and overlapping functions in endocytosis and polarity.</title>
        <authorList>
            <person name="Kouranti I."/>
            <person name="McLean J.R."/>
            <person name="Feoktistova A."/>
            <person name="Liang P."/>
            <person name="Johnson A.E."/>
            <person name="Roberts-Galbraith R.H."/>
            <person name="Gould K.L."/>
        </authorList>
    </citation>
    <scope>IDENTIFICATION BY MASS SPECTROMETRY</scope>
    <scope>INTERACTION WITH UBP5</scope>
    <scope>FUNCTION</scope>
    <scope>SUBCELLULAR LOCATION</scope>
</reference>
<protein>
    <recommendedName>
        <fullName>Ubp5-interacting protein ftp105</fullName>
    </recommendedName>
    <alternativeName>
        <fullName>Down-regulated in multiple cancers 1 homolog 3</fullName>
    </alternativeName>
    <alternativeName>
        <fullName>Hid-1 family protein ftp105</fullName>
    </alternativeName>
</protein>
<keyword id="KW-0963">Cytoplasm</keyword>
<keyword id="KW-0333">Golgi apparatus</keyword>
<keyword id="KW-1185">Reference proteome</keyword>
<dbReference type="EMBL" id="CU329670">
    <property type="protein sequence ID" value="CAB11516.1"/>
    <property type="molecule type" value="Genomic_DNA"/>
</dbReference>
<dbReference type="PIR" id="T37831">
    <property type="entry name" value="T37831"/>
</dbReference>
<dbReference type="RefSeq" id="NP_593484.1">
    <property type="nucleotide sequence ID" value="NM_001018917.2"/>
</dbReference>
<dbReference type="BioGRID" id="278643">
    <property type="interactions" value="92"/>
</dbReference>
<dbReference type="FunCoup" id="O13776">
    <property type="interactions" value="7"/>
</dbReference>
<dbReference type="STRING" id="284812.O13776"/>
<dbReference type="iPTMnet" id="O13776"/>
<dbReference type="PaxDb" id="4896-SPAC17A5.16.1"/>
<dbReference type="EnsemblFungi" id="SPAC17A5.16.1">
    <property type="protein sequence ID" value="SPAC17A5.16.1:pep"/>
    <property type="gene ID" value="SPAC17A5.16"/>
</dbReference>
<dbReference type="GeneID" id="2542168"/>
<dbReference type="KEGG" id="spo:2542168"/>
<dbReference type="PomBase" id="SPAC17A5.16">
    <property type="gene designation" value="ftp105"/>
</dbReference>
<dbReference type="VEuPathDB" id="FungiDB:SPAC17A5.16"/>
<dbReference type="eggNOG" id="KOG2226">
    <property type="taxonomic scope" value="Eukaryota"/>
</dbReference>
<dbReference type="HOGENOM" id="CLU_007392_0_0_1"/>
<dbReference type="InParanoid" id="O13776"/>
<dbReference type="OMA" id="LFIVHYL"/>
<dbReference type="PhylomeDB" id="O13776"/>
<dbReference type="PRO" id="PR:O13776"/>
<dbReference type="Proteomes" id="UP000002485">
    <property type="component" value="Chromosome I"/>
</dbReference>
<dbReference type="GO" id="GO:0005737">
    <property type="term" value="C:cytoplasm"/>
    <property type="evidence" value="ECO:0007005"/>
    <property type="project" value="PomBase"/>
</dbReference>
<dbReference type="GO" id="GO:0005829">
    <property type="term" value="C:cytosol"/>
    <property type="evidence" value="ECO:0007005"/>
    <property type="project" value="PomBase"/>
</dbReference>
<dbReference type="GO" id="GO:0005794">
    <property type="term" value="C:Golgi apparatus"/>
    <property type="evidence" value="ECO:0007005"/>
    <property type="project" value="PomBase"/>
</dbReference>
<dbReference type="GO" id="GO:0005797">
    <property type="term" value="C:Golgi medial cisterna"/>
    <property type="evidence" value="ECO:0000318"/>
    <property type="project" value="GO_Central"/>
</dbReference>
<dbReference type="GO" id="GO:0000138">
    <property type="term" value="C:Golgi trans cisterna"/>
    <property type="evidence" value="ECO:0000318"/>
    <property type="project" value="GO_Central"/>
</dbReference>
<dbReference type="GO" id="GO:0016020">
    <property type="term" value="C:membrane"/>
    <property type="evidence" value="ECO:0000318"/>
    <property type="project" value="GO_Central"/>
</dbReference>
<dbReference type="InterPro" id="IPR026705">
    <property type="entry name" value="Hid-1/Ecm30"/>
</dbReference>
<dbReference type="PANTHER" id="PTHR21575">
    <property type="entry name" value="PROTEIN HID1"/>
    <property type="match status" value="1"/>
</dbReference>
<dbReference type="PANTHER" id="PTHR21575:SF13">
    <property type="entry name" value="UBP5-INTERACTING PROTEIN FTP105"/>
    <property type="match status" value="1"/>
</dbReference>
<dbReference type="Pfam" id="PF12722">
    <property type="entry name" value="Hid1"/>
    <property type="match status" value="1"/>
</dbReference>
<feature type="chain" id="PRO_0000116710" description="Ubp5-interacting protein ftp105">
    <location>
        <begin position="1"/>
        <end position="925"/>
    </location>
</feature>
<feature type="region of interest" description="Disordered" evidence="1">
    <location>
        <begin position="650"/>
        <end position="671"/>
    </location>
</feature>
<feature type="compositionally biased region" description="Low complexity" evidence="1">
    <location>
        <begin position="650"/>
        <end position="664"/>
    </location>
</feature>
<accession>O13776</accession>
<name>FT105_SCHPO</name>
<organism>
    <name type="scientific">Schizosaccharomyces pombe (strain 972 / ATCC 24843)</name>
    <name type="common">Fission yeast</name>
    <dbReference type="NCBI Taxonomy" id="284812"/>
    <lineage>
        <taxon>Eukaryota</taxon>
        <taxon>Fungi</taxon>
        <taxon>Dikarya</taxon>
        <taxon>Ascomycota</taxon>
        <taxon>Taphrinomycotina</taxon>
        <taxon>Schizosaccharomycetes</taxon>
        <taxon>Schizosaccharomycetales</taxon>
        <taxon>Schizosaccharomycetaceae</taxon>
        <taxon>Schizosaccharomyces</taxon>
    </lineage>
</organism>
<evidence type="ECO:0000256" key="1">
    <source>
        <dbReference type="SAM" id="MobiDB-lite"/>
    </source>
</evidence>
<evidence type="ECO:0000269" key="2">
    <source>
    </source>
</evidence>
<evidence type="ECO:0000269" key="3">
    <source>
    </source>
</evidence>
<evidence type="ECO:0000269" key="4">
    <source>
    </source>
</evidence>
<evidence type="ECO:0000305" key="5"/>
<sequence length="925" mass="104836">MGGQESKLAFQRGIARLASQPDIPLDDEVWVSLWSVPESCPEVYDFFPPGLIREMRDHAFVNLEKLLLVLTSRLFALKNDKKFPNPETAPASEALNCIRLLTRIIPFLNEKLDLEEWHQKFWWSLRKKRNLPKENSELDLSNFQDDLDFENSISQKNEFSQKSPSVPLSPVSTFPASSISLDASSDVSAADVSVGGSSTIKEIGSIEETFTHEKTLMEELLDTVFRLLFCRGFTLPLSSPEQYAYIIWENGIGTTETQEKTTKELAFNRIEVLRLLLVLISKRLYRSSEVASHTLTYLTCVANKQLILVFLYSLINTTLRLRPDSWKASYSTLVPYNDSSIALSKLTSQILLLFLDHTPHETTVEYFRQRLNLSPGAAIENQYRLYFSRLQLQADYEFLVNELYRLLNAPVSAISAYISIVQKPNIAFPEIILFLWQAILYNKRFRAFLITSPYATEFLTSIQFYALRYREDNEHSGLVRICLFIVHYLSCEKVLCEKLNRNCMNAQSLMSSLGFSVPPMSYAEFLIISSFHISAVKRSPFSSLSPVILLTICNIAPFVENLSFVTCAKLMQLCSSLSSPRFLFRNPRNHLLLEYLLQAISSIVENKFSQNPNLSYSIIRLQQVFLNLNSMKLPAVAQTKSQPLVALNSEGSSDFESKSSDNTSLDGTPLQNTDFKKVATVEDDSPFDELDKFSSPFSSSSSRGGLSHISSRNVSISVPTVLQDVFSDSPLVLSRKLRGKIPENVSSSELIKKCASNPFGKDLEIDSNLFAPSNSWFNSWHSRLELDSILAIISQFSLPVYKKMNEELSTTDEAVKLLANSVLNDVHPRVPNFRYFIWSVPMNNWFQSLVWLYTLSFDEKGLMATPSLFTTSKVYKQHGNIMKVASPENSSNSMENATKSILDKLDLLYLQLPSSVNHDSSLRNK</sequence>
<comment type="function">
    <text evidence="3 4">Required for the localization of ubp5 to the Golgi apparatus. Involved in detoxification of cadmium ion.</text>
</comment>
<comment type="subunit">
    <text evidence="4">Interacts with ubp5.</text>
</comment>
<comment type="subcellular location">
    <subcellularLocation>
        <location evidence="2">Cytoplasm</location>
    </subcellularLocation>
    <subcellularLocation>
        <location evidence="2 4">Golgi apparatus</location>
    </subcellularLocation>
</comment>
<comment type="similarity">
    <text evidence="5">Belongs to the hid-1 family.</text>
</comment>
<gene>
    <name type="primary">ftp105</name>
    <name type="ORF">SPAC17A5.16</name>
</gene>